<proteinExistence type="evidence at transcript level"/>
<accession>Q8BTG6</accession>
<name>SPRNG_MOUSE</name>
<gene>
    <name type="primary">Spring1</name>
    <name evidence="4" type="synonym">Spring</name>
</gene>
<protein>
    <recommendedName>
        <fullName evidence="4">SREBP regulating gene protein</fullName>
    </recommendedName>
    <alternativeName>
        <fullName>SREBF pathway regulator in Golgi 1</fullName>
    </alternativeName>
</protein>
<sequence>MLNLAALLWRRLLRKRWVLALVFGLSLVYFLSSTFKQEERAVRDRNLLQVQDREQPIPWKVQFNLGNSSRPSNQCRNSVQGKHLLTDELGYVCERKDLLANGCCDVSVPSTKQYCCDGCLANGCCEAYEYCVSCCLQPSKQLLLERFLNRAAVAFQNLFMAVEDHFELCLAKCRTSSQSVQHENTYRDPIAKYCYGESPPELFPA</sequence>
<comment type="function">
    <text evidence="3">Positively regulates hepatic SREBP signaling pathway by modulating the proper localization of SCAP (SREBP cleavage-activating protein) to the endoplasmic reticulum, thereby controlling the level of functional SCAP (PubMed:32111832). Plays a crucial role during embryogenesis (PubMed:32111832).</text>
</comment>
<comment type="subunit">
    <text evidence="1">Interacts with SCAP.</text>
</comment>
<comment type="subcellular location">
    <subcellularLocation>
        <location evidence="1">Golgi apparatus membrane</location>
        <topology evidence="2">Single-pass membrane protein</topology>
    </subcellularLocation>
</comment>
<comment type="tissue specificity">
    <text evidence="3">Ubiquitously expressed with a slightly higher expression in the liver and kidney.</text>
</comment>
<comment type="disruption phenotype">
    <text evidence="3">Knockout leads to early embryonic lethality.</text>
</comment>
<comment type="similarity">
    <text evidence="5">Belongs to the SPRING family.</text>
</comment>
<keyword id="KW-0325">Glycoprotein</keyword>
<keyword id="KW-0333">Golgi apparatus</keyword>
<keyword id="KW-0472">Membrane</keyword>
<keyword id="KW-1185">Reference proteome</keyword>
<keyword id="KW-0812">Transmembrane</keyword>
<keyword id="KW-1133">Transmembrane helix</keyword>
<organism>
    <name type="scientific">Mus musculus</name>
    <name type="common">Mouse</name>
    <dbReference type="NCBI Taxonomy" id="10090"/>
    <lineage>
        <taxon>Eukaryota</taxon>
        <taxon>Metazoa</taxon>
        <taxon>Chordata</taxon>
        <taxon>Craniata</taxon>
        <taxon>Vertebrata</taxon>
        <taxon>Euteleostomi</taxon>
        <taxon>Mammalia</taxon>
        <taxon>Eutheria</taxon>
        <taxon>Euarchontoglires</taxon>
        <taxon>Glires</taxon>
        <taxon>Rodentia</taxon>
        <taxon>Myomorpha</taxon>
        <taxon>Muroidea</taxon>
        <taxon>Muridae</taxon>
        <taxon>Murinae</taxon>
        <taxon>Mus</taxon>
        <taxon>Mus</taxon>
    </lineage>
</organism>
<feature type="chain" id="PRO_0000294330" description="SREBP regulating gene protein">
    <location>
        <begin position="1"/>
        <end position="205"/>
    </location>
</feature>
<feature type="topological domain" description="Cytoplasmic" evidence="1">
    <location>
        <begin position="1"/>
        <end position="16"/>
    </location>
</feature>
<feature type="transmembrane region" description="Helical" evidence="2">
    <location>
        <begin position="17"/>
        <end position="35"/>
    </location>
</feature>
<feature type="topological domain" description="Lumenal" evidence="1">
    <location>
        <begin position="36"/>
        <end position="205"/>
    </location>
</feature>
<feature type="glycosylation site" description="N-linked (GlcNAc...) asparagine" evidence="2">
    <location>
        <position position="67"/>
    </location>
</feature>
<evidence type="ECO:0000250" key="1">
    <source>
        <dbReference type="UniProtKB" id="Q9H741"/>
    </source>
</evidence>
<evidence type="ECO:0000255" key="2"/>
<evidence type="ECO:0000269" key="3">
    <source>
    </source>
</evidence>
<evidence type="ECO:0000303" key="4">
    <source>
    </source>
</evidence>
<evidence type="ECO:0000305" key="5"/>
<reference key="1">
    <citation type="journal article" date="2005" name="Science">
        <title>The transcriptional landscape of the mammalian genome.</title>
        <authorList>
            <person name="Carninci P."/>
            <person name="Kasukawa T."/>
            <person name="Katayama S."/>
            <person name="Gough J."/>
            <person name="Frith M.C."/>
            <person name="Maeda N."/>
            <person name="Oyama R."/>
            <person name="Ravasi T."/>
            <person name="Lenhard B."/>
            <person name="Wells C."/>
            <person name="Kodzius R."/>
            <person name="Shimokawa K."/>
            <person name="Bajic V.B."/>
            <person name="Brenner S.E."/>
            <person name="Batalov S."/>
            <person name="Forrest A.R."/>
            <person name="Zavolan M."/>
            <person name="Davis M.J."/>
            <person name="Wilming L.G."/>
            <person name="Aidinis V."/>
            <person name="Allen J.E."/>
            <person name="Ambesi-Impiombato A."/>
            <person name="Apweiler R."/>
            <person name="Aturaliya R.N."/>
            <person name="Bailey T.L."/>
            <person name="Bansal M."/>
            <person name="Baxter L."/>
            <person name="Beisel K.W."/>
            <person name="Bersano T."/>
            <person name="Bono H."/>
            <person name="Chalk A.M."/>
            <person name="Chiu K.P."/>
            <person name="Choudhary V."/>
            <person name="Christoffels A."/>
            <person name="Clutterbuck D.R."/>
            <person name="Crowe M.L."/>
            <person name="Dalla E."/>
            <person name="Dalrymple B.P."/>
            <person name="de Bono B."/>
            <person name="Della Gatta G."/>
            <person name="di Bernardo D."/>
            <person name="Down T."/>
            <person name="Engstrom P."/>
            <person name="Fagiolini M."/>
            <person name="Faulkner G."/>
            <person name="Fletcher C.F."/>
            <person name="Fukushima T."/>
            <person name="Furuno M."/>
            <person name="Futaki S."/>
            <person name="Gariboldi M."/>
            <person name="Georgii-Hemming P."/>
            <person name="Gingeras T.R."/>
            <person name="Gojobori T."/>
            <person name="Green R.E."/>
            <person name="Gustincich S."/>
            <person name="Harbers M."/>
            <person name="Hayashi Y."/>
            <person name="Hensch T.K."/>
            <person name="Hirokawa N."/>
            <person name="Hill D."/>
            <person name="Huminiecki L."/>
            <person name="Iacono M."/>
            <person name="Ikeo K."/>
            <person name="Iwama A."/>
            <person name="Ishikawa T."/>
            <person name="Jakt M."/>
            <person name="Kanapin A."/>
            <person name="Katoh M."/>
            <person name="Kawasawa Y."/>
            <person name="Kelso J."/>
            <person name="Kitamura H."/>
            <person name="Kitano H."/>
            <person name="Kollias G."/>
            <person name="Krishnan S.P."/>
            <person name="Kruger A."/>
            <person name="Kummerfeld S.K."/>
            <person name="Kurochkin I.V."/>
            <person name="Lareau L.F."/>
            <person name="Lazarevic D."/>
            <person name="Lipovich L."/>
            <person name="Liu J."/>
            <person name="Liuni S."/>
            <person name="McWilliam S."/>
            <person name="Madan Babu M."/>
            <person name="Madera M."/>
            <person name="Marchionni L."/>
            <person name="Matsuda H."/>
            <person name="Matsuzawa S."/>
            <person name="Miki H."/>
            <person name="Mignone F."/>
            <person name="Miyake S."/>
            <person name="Morris K."/>
            <person name="Mottagui-Tabar S."/>
            <person name="Mulder N."/>
            <person name="Nakano N."/>
            <person name="Nakauchi H."/>
            <person name="Ng P."/>
            <person name="Nilsson R."/>
            <person name="Nishiguchi S."/>
            <person name="Nishikawa S."/>
            <person name="Nori F."/>
            <person name="Ohara O."/>
            <person name="Okazaki Y."/>
            <person name="Orlando V."/>
            <person name="Pang K.C."/>
            <person name="Pavan W.J."/>
            <person name="Pavesi G."/>
            <person name="Pesole G."/>
            <person name="Petrovsky N."/>
            <person name="Piazza S."/>
            <person name="Reed J."/>
            <person name="Reid J.F."/>
            <person name="Ring B.Z."/>
            <person name="Ringwald M."/>
            <person name="Rost B."/>
            <person name="Ruan Y."/>
            <person name="Salzberg S.L."/>
            <person name="Sandelin A."/>
            <person name="Schneider C."/>
            <person name="Schoenbach C."/>
            <person name="Sekiguchi K."/>
            <person name="Semple C.A."/>
            <person name="Seno S."/>
            <person name="Sessa L."/>
            <person name="Sheng Y."/>
            <person name="Shibata Y."/>
            <person name="Shimada H."/>
            <person name="Shimada K."/>
            <person name="Silva D."/>
            <person name="Sinclair B."/>
            <person name="Sperling S."/>
            <person name="Stupka E."/>
            <person name="Sugiura K."/>
            <person name="Sultana R."/>
            <person name="Takenaka Y."/>
            <person name="Taki K."/>
            <person name="Tammoja K."/>
            <person name="Tan S.L."/>
            <person name="Tang S."/>
            <person name="Taylor M.S."/>
            <person name="Tegner J."/>
            <person name="Teichmann S.A."/>
            <person name="Ueda H.R."/>
            <person name="van Nimwegen E."/>
            <person name="Verardo R."/>
            <person name="Wei C.L."/>
            <person name="Yagi K."/>
            <person name="Yamanishi H."/>
            <person name="Zabarovsky E."/>
            <person name="Zhu S."/>
            <person name="Zimmer A."/>
            <person name="Hide W."/>
            <person name="Bult C."/>
            <person name="Grimmond S.M."/>
            <person name="Teasdale R.D."/>
            <person name="Liu E.T."/>
            <person name="Brusic V."/>
            <person name="Quackenbush J."/>
            <person name="Wahlestedt C."/>
            <person name="Mattick J.S."/>
            <person name="Hume D.A."/>
            <person name="Kai C."/>
            <person name="Sasaki D."/>
            <person name="Tomaru Y."/>
            <person name="Fukuda S."/>
            <person name="Kanamori-Katayama M."/>
            <person name="Suzuki M."/>
            <person name="Aoki J."/>
            <person name="Arakawa T."/>
            <person name="Iida J."/>
            <person name="Imamura K."/>
            <person name="Itoh M."/>
            <person name="Kato T."/>
            <person name="Kawaji H."/>
            <person name="Kawagashira N."/>
            <person name="Kawashima T."/>
            <person name="Kojima M."/>
            <person name="Kondo S."/>
            <person name="Konno H."/>
            <person name="Nakano K."/>
            <person name="Ninomiya N."/>
            <person name="Nishio T."/>
            <person name="Okada M."/>
            <person name="Plessy C."/>
            <person name="Shibata K."/>
            <person name="Shiraki T."/>
            <person name="Suzuki S."/>
            <person name="Tagami M."/>
            <person name="Waki K."/>
            <person name="Watahiki A."/>
            <person name="Okamura-Oho Y."/>
            <person name="Suzuki H."/>
            <person name="Kawai J."/>
            <person name="Hayashizaki Y."/>
        </authorList>
    </citation>
    <scope>NUCLEOTIDE SEQUENCE [LARGE SCALE MRNA]</scope>
    <source>
        <strain>C57BL/6J</strain>
        <tissue>Brain</tissue>
    </source>
</reference>
<reference key="2">
    <citation type="journal article" date="2004" name="Genome Res.">
        <title>The status, quality, and expansion of the NIH full-length cDNA project: the Mammalian Gene Collection (MGC).</title>
        <authorList>
            <consortium name="The MGC Project Team"/>
        </authorList>
    </citation>
    <scope>NUCLEOTIDE SEQUENCE [LARGE SCALE MRNA]</scope>
</reference>
<reference key="3">
    <citation type="journal article" date="2020" name="Nat. Commun.">
        <title>Haploid genetic screens identify SPRING/C12ORF49 as a determinant of SREBP signaling and cholesterol metabolism.</title>
        <authorList>
            <person name="Loregger A."/>
            <person name="Raaben M."/>
            <person name="Nieuwenhuis J."/>
            <person name="Tan J.M.E."/>
            <person name="Jae L.T."/>
            <person name="van den Hengel L.G."/>
            <person name="Hendrix S."/>
            <person name="van den Berg M."/>
            <person name="Scheij S."/>
            <person name="Song J.Y."/>
            <person name="Huijbers I.J."/>
            <person name="Kroese L.J."/>
            <person name="Ottenhoff R."/>
            <person name="van Weeghel M."/>
            <person name="van de Sluis B."/>
            <person name="Brummelkamp T."/>
            <person name="Zelcer N."/>
        </authorList>
    </citation>
    <scope>FUNCTION</scope>
    <scope>TISSUE SPECIFICITY</scope>
    <scope>DISRUPTION PHENOTYPE</scope>
</reference>
<dbReference type="EMBL" id="AK090380">
    <property type="protein sequence ID" value="BAC41192.1"/>
    <property type="molecule type" value="mRNA"/>
</dbReference>
<dbReference type="EMBL" id="BC104372">
    <property type="protein sequence ID" value="AAI04373.1"/>
    <property type="molecule type" value="mRNA"/>
</dbReference>
<dbReference type="EMBL" id="BC104373">
    <property type="protein sequence ID" value="AAI04374.1"/>
    <property type="molecule type" value="mRNA"/>
</dbReference>
<dbReference type="CCDS" id="CCDS39237.1"/>
<dbReference type="RefSeq" id="NP_001074705.1">
    <property type="nucleotide sequence ID" value="NM_001081236.1"/>
</dbReference>
<dbReference type="SMR" id="Q8BTG6"/>
<dbReference type="FunCoup" id="Q8BTG6">
    <property type="interactions" value="1021"/>
</dbReference>
<dbReference type="STRING" id="10090.ENSMUSP00000043410"/>
<dbReference type="GlyCosmos" id="Q8BTG6">
    <property type="glycosylation" value="1 site, No reported glycans"/>
</dbReference>
<dbReference type="GlyGen" id="Q8BTG6">
    <property type="glycosylation" value="1 site, 1 N-linked glycan (1 site)"/>
</dbReference>
<dbReference type="PhosphoSitePlus" id="Q8BTG6"/>
<dbReference type="PaxDb" id="10090-ENSMUSP00000043410"/>
<dbReference type="PeptideAtlas" id="Q8BTG6"/>
<dbReference type="Antibodypedia" id="31314">
    <property type="antibodies" value="95 antibodies from 17 providers"/>
</dbReference>
<dbReference type="Ensembl" id="ENSMUST00000049138.8">
    <property type="protein sequence ID" value="ENSMUSP00000043410.8"/>
    <property type="gene ID" value="ENSMUSG00000032840.8"/>
</dbReference>
<dbReference type="GeneID" id="76792"/>
<dbReference type="KEGG" id="mmu:76792"/>
<dbReference type="UCSC" id="uc008zgj.1">
    <property type="organism name" value="mouse"/>
</dbReference>
<dbReference type="AGR" id="MGI:1924042"/>
<dbReference type="CTD" id="79794"/>
<dbReference type="MGI" id="MGI:1924042">
    <property type="gene designation" value="Spring1"/>
</dbReference>
<dbReference type="VEuPathDB" id="HostDB:ENSMUSG00000032840"/>
<dbReference type="eggNOG" id="KOG3136">
    <property type="taxonomic scope" value="Eukaryota"/>
</dbReference>
<dbReference type="GeneTree" id="ENSGT00390000008031"/>
<dbReference type="HOGENOM" id="CLU_079455_0_0_1"/>
<dbReference type="InParanoid" id="Q8BTG6"/>
<dbReference type="OMA" id="CNTTSHC"/>
<dbReference type="OrthoDB" id="70142at2759"/>
<dbReference type="PhylomeDB" id="Q8BTG6"/>
<dbReference type="TreeFam" id="TF323884"/>
<dbReference type="BioGRID-ORCS" id="76792">
    <property type="hits" value="21 hits in 77 CRISPR screens"/>
</dbReference>
<dbReference type="PRO" id="PR:Q8BTG6"/>
<dbReference type="Proteomes" id="UP000000589">
    <property type="component" value="Chromosome 5"/>
</dbReference>
<dbReference type="RNAct" id="Q8BTG6">
    <property type="molecule type" value="protein"/>
</dbReference>
<dbReference type="Bgee" id="ENSMUSG00000032840">
    <property type="expression patterns" value="Expressed in lumbar subsegment of spinal cord and 197 other cell types or tissues"/>
</dbReference>
<dbReference type="GO" id="GO:0000139">
    <property type="term" value="C:Golgi membrane"/>
    <property type="evidence" value="ECO:0000250"/>
    <property type="project" value="UniProtKB"/>
</dbReference>
<dbReference type="GO" id="GO:2000640">
    <property type="term" value="P:positive regulation of SREBP signaling pathway"/>
    <property type="evidence" value="ECO:0000315"/>
    <property type="project" value="UniProtKB"/>
</dbReference>
<dbReference type="InterPro" id="IPR019352">
    <property type="entry name" value="SPRING1"/>
</dbReference>
<dbReference type="PANTHER" id="PTHR13481">
    <property type="entry name" value="SREBP REGULATING GENE PROTEIN"/>
    <property type="match status" value="1"/>
</dbReference>
<dbReference type="PANTHER" id="PTHR13481:SF0">
    <property type="entry name" value="SREBP REGULATING GENE PROTEIN"/>
    <property type="match status" value="1"/>
</dbReference>
<dbReference type="Pfam" id="PF10218">
    <property type="entry name" value="SPRING1"/>
    <property type="match status" value="1"/>
</dbReference>